<sequence length="784" mass="89671">MKKRIPTLLATMIATALYSQQGLAADLASQCMLGVPSYDRPLVQGDTNDLPVTINADHAKGDYPDDAVFTGSVDIMQGNSRLQADEVQLHQKEAPGQPEPVRTVDALGNVHYDDNQVILKGPKGWANLNTKDTNVWEGDYQMVGRQGRGKADLMKQRGENRYTILDNGSFTSCLPGSDTWSVVGSEIIHDREEQVAEIWNARFKVGPVPIFYSPYLQLPVGDKRRSGFLIPNAKYTTTNYFEFYLPYYWNIAPNMDATITPHYMHRRGNIMWENEFRYLSQAGAGLMELDYLPSDKVYEDEHPNDDSSRRWLFYWNHSGVMDQVWRFNVDYTKVSDPSYFNDFDNKYGSSTDGYATQKFSVGYAVQNFNATVSTKQFQVFSEQNTSSYSAEPQLDVNYYQNDVGPFDTRIYGQAVHFVNTRDDMPEATRVHLEPTINLPLSNNWGSINTEAKLLATHYQQTNLDWYNSRNTTKLDESVNRVMPQFKVDGKMVFERDMEMLAPGYTQTLEPRAQYLYVPYRDQSDIYNYDSSLLQSDYSGLFRDRTYGGLDRIASANQVTTGVTSRIYDDAAVERFNISVGQIYYFTESRTGDDNITWENDDKTGSLVWAGDTYWRISERWGLRGGIQYDTRLDNVATSNSSIEYRRDEDRLVQLNYRYASPEYIQATLPKYYSTAEQYKNGISQVGAVASWPIADRWSIVGAYYYDTNANKQADSMLGVQYSSCCYAIRVGYERKLNGWDNDKQHAVYDNAIGFNIELRGLSSNYGLGTQEMLRSNILPYQNTL</sequence>
<reference key="1">
    <citation type="submission" date="1998-04" db="EMBL/GenBank/DDBJ databases">
        <title>N-hexane sensitivity of Escherichia coli due to low expression of ostA/imp by insertion of IS2 and identification of the gene product as an outer membrane protein.</title>
        <authorList>
            <person name="Abe S."/>
            <person name="Okutsu T."/>
            <person name="Negishi T."/>
            <person name="Nakajima H."/>
            <person name="Aono R."/>
        </authorList>
    </citation>
    <scope>NUCLEOTIDE SEQUENCE [GENOMIC DNA]</scope>
</reference>
<reference key="2">
    <citation type="journal article" date="1992" name="Nucleic Acids Res.">
        <title>Systematic sequencing of the Escherichia coli genome: analysis of the 0-2.4 min region.</title>
        <authorList>
            <person name="Yura T."/>
            <person name="Mori H."/>
            <person name="Nagai H."/>
            <person name="Nagata T."/>
            <person name="Ishihama A."/>
            <person name="Fujita N."/>
            <person name="Isono K."/>
            <person name="Mizobuchi K."/>
            <person name="Nakata A."/>
        </authorList>
    </citation>
    <scope>NUCLEOTIDE SEQUENCE [LARGE SCALE GENOMIC DNA]</scope>
    <source>
        <strain>K12</strain>
    </source>
</reference>
<reference key="3">
    <citation type="journal article" date="1997" name="Science">
        <title>The complete genome sequence of Escherichia coli K-12.</title>
        <authorList>
            <person name="Blattner F.R."/>
            <person name="Plunkett G. III"/>
            <person name="Bloch C.A."/>
            <person name="Perna N.T."/>
            <person name="Burland V."/>
            <person name="Riley M."/>
            <person name="Collado-Vides J."/>
            <person name="Glasner J.D."/>
            <person name="Rode C.K."/>
            <person name="Mayhew G.F."/>
            <person name="Gregor J."/>
            <person name="Davis N.W."/>
            <person name="Kirkpatrick H.A."/>
            <person name="Goeden M.A."/>
            <person name="Rose D.J."/>
            <person name="Mau B."/>
            <person name="Shao Y."/>
        </authorList>
    </citation>
    <scope>NUCLEOTIDE SEQUENCE [LARGE SCALE GENOMIC DNA]</scope>
    <source>
        <strain>K12 / MG1655 / ATCC 47076</strain>
    </source>
</reference>
<reference key="4">
    <citation type="journal article" date="2006" name="Mol. Syst. Biol.">
        <title>Highly accurate genome sequences of Escherichia coli K-12 strains MG1655 and W3110.</title>
        <authorList>
            <person name="Hayashi K."/>
            <person name="Morooka N."/>
            <person name="Yamamoto Y."/>
            <person name="Fujita K."/>
            <person name="Isono K."/>
            <person name="Choi S."/>
            <person name="Ohtsubo E."/>
            <person name="Baba T."/>
            <person name="Wanner B.L."/>
            <person name="Mori H."/>
            <person name="Horiuchi T."/>
        </authorList>
    </citation>
    <scope>NUCLEOTIDE SEQUENCE [LARGE SCALE GENOMIC DNA]</scope>
    <source>
        <strain>K12 / W3110 / ATCC 27325 / DSM 5911</strain>
    </source>
</reference>
<reference key="5">
    <citation type="journal article" date="1997" name="Electrophoresis">
        <title>Comparing the predicted and observed properties of proteins encoded in the genome of Escherichia coli K-12.</title>
        <authorList>
            <person name="Link A.J."/>
            <person name="Robison K."/>
            <person name="Church G.M."/>
        </authorList>
    </citation>
    <scope>PROTEIN SEQUENCE OF 25-29</scope>
    <source>
        <strain>K12 / EMG2</strain>
    </source>
</reference>
<reference key="6">
    <citation type="journal article" date="2003" name="Microbiology">
        <title>N-Hexane sensitivity of Escherichia coli due to low expression of imp/ostA encoding an 87 kDa minor protein associated with the outer membrane.</title>
        <authorList>
            <person name="Abe S."/>
            <person name="Okutsu T."/>
            <person name="Nakajima H."/>
            <person name="Kakuda N."/>
            <person name="Ohtsu I."/>
            <person name="Aono R."/>
        </authorList>
    </citation>
    <scope>PROTEIN SEQUENCE OF 25-32</scope>
    <scope>SUBCELLULAR LOCATION</scope>
    <scope>FUNCTION IN HEXANE RESISTANCE</scope>
    <source>
        <strain>K12 / JA300 / ATCC 33588 / DSM 4776 / NCIMB 12220</strain>
    </source>
</reference>
<reference key="7">
    <citation type="journal article" date="1989" name="Genetics">
        <title>Identification and characterization of a new gene of Escherichia coli K-12 involved in outer membrane permeability.</title>
        <authorList>
            <person name="Sampson B.A."/>
            <person name="Misra R."/>
            <person name="Benson S.A."/>
        </authorList>
    </citation>
    <scope>FUNCTION</scope>
    <scope>DISRUPTION PHENOTYPE</scope>
</reference>
<reference key="8">
    <citation type="journal article" date="1994" name="Appl. Environ. Microbiol.">
        <title>Cloning of organic solvent tolerance gene ostA that determines n-hexane tolerance level in Escherichia coli.</title>
        <authorList>
            <person name="Aono R."/>
            <person name="Negishi T."/>
            <person name="Nakajima H."/>
        </authorList>
    </citation>
    <scope>FUNCTION IN HEXANE RESISTANCE</scope>
    <source>
        <strain>K12 / JA300 / ATCC 33588 / DSM 4776 / NCIMB 12220</strain>
    </source>
</reference>
<reference key="9">
    <citation type="journal article" date="2002" name="Mol. Microbiol.">
        <title>Imp/OstA is required for cell envelope biogenesis in Escherichia coli.</title>
        <authorList>
            <person name="Braun M."/>
            <person name="Silhavy T.J."/>
        </authorList>
    </citation>
    <scope>FUNCTION</scope>
    <scope>SUBCELLULAR LOCATION</scope>
    <scope>DISRUPTION PHENOTYPE</scope>
    <scope>DISULFIDE BONDS</scope>
</reference>
<reference key="10">
    <citation type="journal article" date="2004" name="Biosci. Biotechnol. Biochem.">
        <title>Transcriptional analysis of the ostA/imp gene involved in organic solvent sensitivity in Escherichia coli.</title>
        <authorList>
            <person name="Ohtsu I."/>
            <person name="Kakuda N."/>
            <person name="Tsukagoshi N."/>
            <person name="Dokyu N."/>
            <person name="Takagi H."/>
            <person name="Wachi M."/>
            <person name="Aono R."/>
        </authorList>
    </citation>
    <scope>INDUCTION</scope>
</reference>
<reference key="11">
    <citation type="journal article" date="2005" name="J. Biol. Chem.">
        <title>Protein complexes of the Escherichia coli cell envelope.</title>
        <authorList>
            <person name="Stenberg F."/>
            <person name="Chovanec P."/>
            <person name="Maslen S.L."/>
            <person name="Robinson C.V."/>
            <person name="Ilag L."/>
            <person name="von Heijne G."/>
            <person name="Daley D.O."/>
        </authorList>
    </citation>
    <scope>SUBUNIT</scope>
    <scope>SUBCELLULAR LOCATION</scope>
    <source>
        <strain>BL21-DE3</strain>
    </source>
</reference>
<reference key="12">
    <citation type="journal article" date="2006" name="Proc. Natl. Acad. Sci. U.S.A.">
        <title>Identification of a protein complex that assembles lipopolysaccharide in the outer membrane of Escherichia coli.</title>
        <authorList>
            <person name="Wu T."/>
            <person name="McCandlish A.C."/>
            <person name="Gronenberg L.S."/>
            <person name="Chng S.-S."/>
            <person name="Silhavy T.J."/>
            <person name="Kahne D."/>
        </authorList>
    </citation>
    <scope>IDENTIFICATION BY MASS SPECTROMETRY</scope>
    <scope>FUNCTION</scope>
    <scope>INTERACTION WITH LPTE</scope>
    <source>
        <strain>K12 / MC4100 / ATCC 35695 / DSM 6574</strain>
    </source>
</reference>
<reference key="13">
    <citation type="journal article" date="2008" name="J. Bacteriol.">
        <title>Functional analysis of the protein machinery required for transport of lipopolysaccharide to the outer membrane of Escherichia coli.</title>
        <authorList>
            <person name="Sperandeo P."/>
            <person name="Lau F.K."/>
            <person name="Carpentieri A."/>
            <person name="De Castro C."/>
            <person name="Molinaro A."/>
            <person name="Deho G."/>
            <person name="Silhavy T.J."/>
            <person name="Polissi A."/>
        </authorList>
    </citation>
    <scope>FUNCTION</scope>
    <scope>GENE NAME</scope>
    <source>
        <strain>K12 / MC4100 / ATCC 35695 / DSM 6574</strain>
    </source>
</reference>
<reference key="14">
    <citation type="journal article" date="2010" name="Biochemistry">
        <title>Proteins required for lipopolysaccharide assembly in Escherichia coli form a transenvelope complex.</title>
        <authorList>
            <person name="Chng S.S."/>
            <person name="Gronenberg L.S."/>
            <person name="Kahne D."/>
        </authorList>
    </citation>
    <scope>SUBCELLULAR LOCATION</scope>
</reference>
<reference key="15">
    <citation type="journal article" date="2010" name="J. Biol. Chem.">
        <title>The protein-disulfide isomerase DsbC cooperates with SurA and DsbA in the assembly of the essential beta-barrel protein LptD.</title>
        <authorList>
            <person name="Denoncin K."/>
            <person name="Vertommen D."/>
            <person name="Paek E."/>
            <person name="Collet J.F."/>
        </authorList>
    </citation>
    <scope>DISULFIDE BONDS</scope>
    <scope>ASSEMBLY</scope>
    <source>
        <strain>K12 / MC4100 / ATCC 35695 / DSM 6574</strain>
    </source>
</reference>
<reference key="16">
    <citation type="journal article" date="2010" name="J. Phys. Condens. Matter.">
        <title>The properties of the outer membrane localized Lipid A transporter LptD.</title>
        <authorList>
            <person name="Haarmann R."/>
            <person name="Ibrahim M."/>
            <person name="Stevanovic M."/>
            <person name="Bredemeier R."/>
            <person name="Schleiff E."/>
        </authorList>
    </citation>
    <scope>FUNCTION</scope>
</reference>
<reference key="17">
    <citation type="journal article" date="2010" name="Proc. Natl. Acad. Sci. U.S.A.">
        <title>Characterization of the two-protein complex in Escherichia coli responsible for lipopolysaccharide assembly at the outer membrane.</title>
        <authorList>
            <person name="Chng S.S."/>
            <person name="Ruiz N."/>
            <person name="Chimalakonda G."/>
            <person name="Silhavy T.J."/>
            <person name="Kahne D."/>
        </authorList>
    </citation>
    <scope>FUNCTION</scope>
    <scope>INTERACTION WITH LPTE</scope>
    <scope>DOMAIN</scope>
</reference>
<reference key="18">
    <citation type="journal article" date="2010" name="Proc. Natl. Acad. Sci. U.S.A.">
        <title>Nonconsecutive disulfide bond formation in an essential integral outer membrane protein.</title>
        <authorList>
            <person name="Ruiz N."/>
            <person name="Chng S.S."/>
            <person name="Hiniker A."/>
            <person name="Kahne D."/>
            <person name="Silhavy T.J."/>
        </authorList>
    </citation>
    <scope>DISULFIDE BONDS</scope>
</reference>
<reference key="19">
    <citation type="journal article" date="2011" name="Proc. Natl. Acad. Sci. U.S.A.">
        <title>The complex that inserts lipopolysaccharide into the bacterial outer membrane forms a two-protein plug-and-barrel.</title>
        <authorList>
            <person name="Freinkman E."/>
            <person name="Chng S.S."/>
            <person name="Kahne D."/>
        </authorList>
    </citation>
    <scope>INTERACTION WITH LPTE</scope>
    <scope>DOMAIN</scope>
    <scope>MUTAGENESIS OF 529-ASP--SER-538</scope>
</reference>
<reference key="20">
    <citation type="journal article" date="2011" name="Proc. Natl. Acad. Sci. U.S.A.">
        <title>Lipoprotein LptE is required for the assembly of LptD by the beta-barrel assembly machine in the outer membrane of Escherichia coli.</title>
        <authorList>
            <person name="Chimalakonda G."/>
            <person name="Ruiz N."/>
            <person name="Chng S.S."/>
            <person name="Garner R.A."/>
            <person name="Kahne D."/>
            <person name="Silhavy T.J."/>
        </authorList>
    </citation>
    <scope>INTERACTION WITH LPTE</scope>
</reference>
<reference key="21">
    <citation type="journal article" date="2012" name="Biochemistry">
        <title>Regulated assembly of the transenvelope protein complex required for lipopolysaccharide export.</title>
        <authorList>
            <person name="Freinkman E."/>
            <person name="Okuda S."/>
            <person name="Ruiz N."/>
            <person name="Kahne D."/>
        </authorList>
    </citation>
    <scope>INTERACTION WITH LPTA</scope>
    <scope>DOMAIN</scope>
</reference>
<reference key="22">
    <citation type="journal article" date="2012" name="Science">
        <title>Disulfide rearrangement triggered by translocon assembly controls lipopolysaccharide export.</title>
        <authorList>
            <person name="Chng S.S."/>
            <person name="Xue M."/>
            <person name="Garner R.A."/>
            <person name="Kadokura H."/>
            <person name="Boyd D."/>
            <person name="Beckwith J."/>
            <person name="Kahne D."/>
        </authorList>
    </citation>
    <scope>DISULFIDE BONDS</scope>
</reference>
<reference key="23">
    <citation type="journal article" date="2013" name="J. Bacteriol.">
        <title>Role for Skp in LptD assembly in Escherichia coli.</title>
        <authorList>
            <person name="Schwalm J."/>
            <person name="Mahoney T.F."/>
            <person name="Soltes G.R."/>
            <person name="Silhavy T.J."/>
        </authorList>
    </citation>
    <scope>ASSEMBLY</scope>
    <source>
        <strain>K12 / MC4100 / ATCC 35695 / DSM 6574</strain>
    </source>
</reference>
<reference key="24">
    <citation type="journal article" date="2013" name="Proc. Natl. Acad. Sci. U.S.A.">
        <title>Protease homolog BepA (YfgC) promotes assembly and degradation of beta-barrel membrane proteins in Escherichia coli.</title>
        <authorList>
            <person name="Narita S."/>
            <person name="Masui C."/>
            <person name="Suzuki T."/>
            <person name="Dohmae N."/>
            <person name="Akiyama Y."/>
        </authorList>
    </citation>
    <scope>ASSEMBLY</scope>
    <source>
        <strain>K12</strain>
    </source>
</reference>
<reference key="25">
    <citation type="journal article" date="2017" name="J. Bacteriol.">
        <title>Distinctive roles for periplasmic proteases in the maintenance of essential outer membrane protein assembly.</title>
        <authorList>
            <person name="Soltes G.R."/>
            <person name="Martin N.R."/>
            <person name="Park E."/>
            <person name="Sutterlin H.A."/>
            <person name="Silhavy T.J."/>
        </authorList>
    </citation>
    <scope>DEGRADATION BY DEGP; BEPA AND YCAL</scope>
</reference>
<reference key="26">
    <citation type="journal article" date="2023" name="Nat. Commun.">
        <title>LptM promotes oxidative maturation of the lipopolysaccharide translocon by substrate binding mimicry.</title>
        <authorList>
            <person name="Yang Y."/>
            <person name="Chen H."/>
            <person name="Corey R.A."/>
            <person name="Morales V."/>
            <person name="Quentin Y."/>
            <person name="Froment C."/>
            <person name="Caumont-Sarcos A."/>
            <person name="Albenne C."/>
            <person name="Burlet-Schiltz O."/>
            <person name="Ranava D."/>
            <person name="Stansfeld P.J."/>
            <person name="Marcoux J."/>
            <person name="Ieva R."/>
        </authorList>
    </citation>
    <scope>INTERACTION WITH LPTM</scope>
    <source>
        <strain>K12 / BW25113</strain>
    </source>
</reference>
<feature type="signal peptide" evidence="1 3 22">
    <location>
        <begin position="1"/>
        <end position="24"/>
    </location>
</feature>
<feature type="chain" id="PRO_0000020276" description="LPS-assembly protein LptD">
    <location>
        <begin position="25"/>
        <end position="784"/>
    </location>
</feature>
<feature type="disulfide bond">
    <location>
        <begin position="31"/>
        <end position="724"/>
    </location>
</feature>
<feature type="disulfide bond">
    <location>
        <begin position="173"/>
        <end position="725"/>
    </location>
</feature>
<feature type="mutagenesis site" description="Impairs assembly of the LptD/LptE complex. Does not form native disulfide bonds. Severely compromises outer membrane integrity." evidence="12">
    <location>
        <begin position="529"/>
        <end position="538"/>
    </location>
</feature>
<feature type="strand" evidence="23">
    <location>
        <begin position="233"/>
        <end position="236"/>
    </location>
</feature>
<feature type="turn" evidence="23">
    <location>
        <begin position="237"/>
        <end position="239"/>
    </location>
</feature>
<feature type="strand" evidence="23">
    <location>
        <begin position="240"/>
        <end position="244"/>
    </location>
</feature>
<feature type="strand" evidence="23">
    <location>
        <begin position="247"/>
        <end position="249"/>
    </location>
</feature>
<feature type="strand" evidence="23">
    <location>
        <begin position="252"/>
        <end position="254"/>
    </location>
</feature>
<feature type="strand" evidence="23">
    <location>
        <begin position="256"/>
        <end position="264"/>
    </location>
</feature>
<feature type="helix" evidence="23">
    <location>
        <begin position="265"/>
        <end position="267"/>
    </location>
</feature>
<feature type="strand" evidence="23">
    <location>
        <begin position="269"/>
        <end position="279"/>
    </location>
</feature>
<feature type="strand" evidence="23">
    <location>
        <begin position="284"/>
        <end position="292"/>
    </location>
</feature>
<feature type="helix" evidence="23">
    <location>
        <begin position="296"/>
        <end position="299"/>
    </location>
</feature>
<feature type="strand" evidence="23">
    <location>
        <begin position="300"/>
        <end position="302"/>
    </location>
</feature>
<feature type="strand" evidence="23">
    <location>
        <begin position="310"/>
        <end position="321"/>
    </location>
</feature>
<feature type="turn" evidence="23">
    <location>
        <begin position="322"/>
        <end position="324"/>
    </location>
</feature>
<feature type="strand" evidence="23">
    <location>
        <begin position="325"/>
        <end position="336"/>
    </location>
</feature>
<feature type="helix" evidence="23">
    <location>
        <begin position="339"/>
        <end position="342"/>
    </location>
</feature>
<feature type="strand" evidence="23">
    <location>
        <begin position="346"/>
        <end position="348"/>
    </location>
</feature>
<feature type="strand" evidence="23">
    <location>
        <begin position="353"/>
        <end position="365"/>
    </location>
</feature>
<feature type="strand" evidence="23">
    <location>
        <begin position="368"/>
        <end position="379"/>
    </location>
</feature>
<feature type="strand" evidence="23">
    <location>
        <begin position="388"/>
        <end position="403"/>
    </location>
</feature>
<feature type="strand" evidence="23">
    <location>
        <begin position="406"/>
        <end position="421"/>
    </location>
</feature>
<feature type="strand" evidence="23">
    <location>
        <begin position="426"/>
        <end position="441"/>
    </location>
</feature>
<feature type="strand" evidence="23">
    <location>
        <begin position="443"/>
        <end position="453"/>
    </location>
</feature>
<feature type="strand" evidence="23">
    <location>
        <begin position="455"/>
        <end position="461"/>
    </location>
</feature>
<feature type="helix" evidence="23">
    <location>
        <begin position="463"/>
        <end position="469"/>
    </location>
</feature>
<feature type="strand" evidence="23">
    <location>
        <begin position="470"/>
        <end position="472"/>
    </location>
</feature>
<feature type="strand" evidence="23">
    <location>
        <begin position="476"/>
        <end position="480"/>
    </location>
</feature>
<feature type="strand" evidence="23">
    <location>
        <begin position="483"/>
        <end position="491"/>
    </location>
</feature>
<feature type="strand" evidence="23">
    <location>
        <begin position="493"/>
        <end position="495"/>
    </location>
</feature>
<feature type="turn" evidence="23">
    <location>
        <begin position="498"/>
        <end position="500"/>
    </location>
</feature>
<feature type="strand" evidence="23">
    <location>
        <begin position="505"/>
        <end position="516"/>
    </location>
</feature>
<feature type="helix" evidence="23">
    <location>
        <begin position="522"/>
        <end position="524"/>
    </location>
</feature>
<feature type="helix" evidence="23">
    <location>
        <begin position="538"/>
        <end position="540"/>
    </location>
</feature>
<feature type="strand" evidence="23">
    <location>
        <begin position="545"/>
        <end position="550"/>
    </location>
</feature>
<feature type="strand" evidence="23">
    <location>
        <begin position="556"/>
        <end position="567"/>
    </location>
</feature>
<feature type="strand" evidence="23">
    <location>
        <begin position="575"/>
        <end position="586"/>
    </location>
</feature>
<feature type="strand" evidence="23">
    <location>
        <begin position="603"/>
        <end position="614"/>
    </location>
</feature>
<feature type="strand" evidence="23">
    <location>
        <begin position="617"/>
        <end position="629"/>
    </location>
</feature>
<feature type="turn" evidence="23">
    <location>
        <begin position="630"/>
        <end position="633"/>
    </location>
</feature>
<feature type="strand" evidence="23">
    <location>
        <begin position="634"/>
        <end position="659"/>
    </location>
</feature>
<feature type="helix" evidence="23">
    <location>
        <begin position="661"/>
        <end position="667"/>
    </location>
</feature>
<feature type="helix" evidence="23">
    <location>
        <begin position="670"/>
        <end position="673"/>
    </location>
</feature>
<feature type="helix" evidence="23">
    <location>
        <begin position="676"/>
        <end position="679"/>
    </location>
</feature>
<feature type="strand" evidence="23">
    <location>
        <begin position="682"/>
        <end position="691"/>
    </location>
</feature>
<feature type="turn" evidence="23">
    <location>
        <begin position="694"/>
        <end position="696"/>
    </location>
</feature>
<feature type="strand" evidence="23">
    <location>
        <begin position="699"/>
        <end position="706"/>
    </location>
</feature>
<feature type="turn" evidence="23">
    <location>
        <begin position="707"/>
        <end position="710"/>
    </location>
</feature>
<feature type="strand" evidence="23">
    <location>
        <begin position="711"/>
        <end position="720"/>
    </location>
</feature>
<feature type="strand" evidence="23">
    <location>
        <begin position="729"/>
        <end position="740"/>
    </location>
</feature>
<feature type="turn" evidence="23">
    <location>
        <begin position="741"/>
        <end position="744"/>
    </location>
</feature>
<feature type="strand" evidence="23">
    <location>
        <begin position="745"/>
        <end position="755"/>
    </location>
</feature>
<feature type="strand" evidence="23">
    <location>
        <begin position="760"/>
        <end position="762"/>
    </location>
</feature>
<feature type="helix" evidence="23">
    <location>
        <begin position="769"/>
        <end position="773"/>
    </location>
</feature>
<feature type="strand" evidence="23">
    <location>
        <begin position="776"/>
        <end position="778"/>
    </location>
</feature>
<evidence type="ECO:0000255" key="1">
    <source>
        <dbReference type="HAMAP-Rule" id="MF_01411"/>
    </source>
</evidence>
<evidence type="ECO:0000269" key="2">
    <source>
    </source>
</evidence>
<evidence type="ECO:0000269" key="3">
    <source>
    </source>
</evidence>
<evidence type="ECO:0000269" key="4">
    <source>
    </source>
</evidence>
<evidence type="ECO:0000269" key="5">
    <source>
    </source>
</evidence>
<evidence type="ECO:0000269" key="6">
    <source>
    </source>
</evidence>
<evidence type="ECO:0000269" key="7">
    <source>
    </source>
</evidence>
<evidence type="ECO:0000269" key="8">
    <source>
    </source>
</evidence>
<evidence type="ECO:0000269" key="9">
    <source>
    </source>
</evidence>
<evidence type="ECO:0000269" key="10">
    <source>
    </source>
</evidence>
<evidence type="ECO:0000269" key="11">
    <source>
    </source>
</evidence>
<evidence type="ECO:0000269" key="12">
    <source>
    </source>
</evidence>
<evidence type="ECO:0000269" key="13">
    <source>
    </source>
</evidence>
<evidence type="ECO:0000269" key="14">
    <source>
    </source>
</evidence>
<evidence type="ECO:0000269" key="15">
    <source>
    </source>
</evidence>
<evidence type="ECO:0000269" key="16">
    <source>
    </source>
</evidence>
<evidence type="ECO:0000269" key="17">
    <source>
    </source>
</evidence>
<evidence type="ECO:0000269" key="18">
    <source>
    </source>
</evidence>
<evidence type="ECO:0000269" key="19">
    <source>
    </source>
</evidence>
<evidence type="ECO:0000269" key="20">
    <source>
    </source>
</evidence>
<evidence type="ECO:0000269" key="21">
    <source>
    </source>
</evidence>
<evidence type="ECO:0000269" key="22">
    <source>
    </source>
</evidence>
<evidence type="ECO:0007829" key="23">
    <source>
        <dbReference type="PDB" id="4RHB"/>
    </source>
</evidence>
<gene>
    <name evidence="1" type="primary">lptD</name>
    <name type="synonym">imp</name>
    <name type="synonym">ostA</name>
    <name type="synonym">yabG</name>
    <name type="ordered locus">b0054</name>
    <name type="ordered locus">JW0053</name>
</gene>
<proteinExistence type="evidence at protein level"/>
<comment type="function">
    <text evidence="1 2 3 6 7 8 14 18 21">Together with LptE, is involved in the assembly of lipopolysaccharide (LPS) at the surface of the outer membrane. Contributes to n-hexane resistance.</text>
</comment>
<comment type="subunit">
    <text evidence="5 6 8 12 13 15 20">Component of the lipopolysaccharide transport and assembly complex. Interacts with LptE and LptA. May interact with LptE during assembly of LptD by the beta-barrel assembly machine (BAM) (PubMed:16079137, PubMed:16861298, PubMed:20203010, PubMed:21257904, PubMed:21257909, PubMed:22668317). Also interacts with LptM, which promotes the efficient assembly of the LptDE translocon by the BAM complex (PubMed:37821449).</text>
</comment>
<comment type="interaction">
    <interactant intactId="EBI-549369">
        <id>P31554</id>
    </interactant>
    <interactant intactId="EBI-1132001">
        <id>P0ADV1</id>
        <label>lptA</label>
    </interactant>
    <organismsDiffer>false</organismsDiffer>
    <experiments>4</experiments>
</comment>
<comment type="interaction">
    <interactant intactId="EBI-549369">
        <id>P31554</id>
    </interactant>
    <interactant intactId="EBI-1119442">
        <id>P0ADC1</id>
        <label>lptE</label>
    </interactant>
    <organismsDiffer>false</organismsDiffer>
    <experiments>19</experiments>
</comment>
<comment type="subcellular location">
    <subcellularLocation>
        <location evidence="1 2 3 5 9">Cell outer membrane</location>
    </subcellularLocation>
</comment>
<comment type="induction">
    <text evidence="4">Constitutively expressed.</text>
</comment>
<comment type="domain">
    <text evidence="8 12 15">Contains an N-terminal soluble domain that is likely periplasmic and interacts with LptA, and a C-terminal transmembrane domain, which is predicted to be a beta-barrel and interacts with LptE. Residues 529-538 play a key role in interaction with LptE.</text>
</comment>
<comment type="PTM">
    <text>Contains two intramolecular disulfide bonds. At least one disulfide bond is required for activity, and protein is probably fully oxidized in vivo.</text>
</comment>
<comment type="disruption phenotype">
    <text evidence="2 18">Mutations alter the permeability of the outer membrane resulting in increased sensitivity to detergents, antibiotics and dyes. Depletion leads to filamentation followed by membrane rupture and cell lysis.</text>
</comment>
<comment type="miscellaneous">
    <text evidence="10 11 12 13 16 17 19">The correct assembly of LptD depends on the thiol:disulfide interchange proteins DsbA and DsbC, the chaperone proteins SurA and Skp, LptE and the chaperone/protease BepA (PubMed:20566849, PubMed:20615876, PubMed:21257904, PubMed:21257909, PubMed:23772069, PubMed:24003122). Incorrectly folded LptD can be degraded by three different proteases, DegP, BepA and YcaL. These proteases act at distinct points in the outer membrane protein assembly (PubMed:24003122, PubMed:28784813).</text>
</comment>
<comment type="similarity">
    <text evidence="1">Belongs to the LptD family.</text>
</comment>
<accession>P31554</accession>
<accession>P75631</accession>
<dbReference type="EMBL" id="AB013134">
    <property type="protein sequence ID" value="BAA34130.1"/>
    <property type="molecule type" value="Genomic_DNA"/>
</dbReference>
<dbReference type="EMBL" id="U00096">
    <property type="protein sequence ID" value="AAC73165.1"/>
    <property type="molecule type" value="Genomic_DNA"/>
</dbReference>
<dbReference type="EMBL" id="AP009048">
    <property type="protein sequence ID" value="BAB96622.1"/>
    <property type="molecule type" value="Genomic_DNA"/>
</dbReference>
<dbReference type="PIR" id="F64726">
    <property type="entry name" value="F64726"/>
</dbReference>
<dbReference type="RefSeq" id="NP_414596.1">
    <property type="nucleotide sequence ID" value="NC_000913.3"/>
</dbReference>
<dbReference type="RefSeq" id="WP_000746151.1">
    <property type="nucleotide sequence ID" value="NZ_LN832404.1"/>
</dbReference>
<dbReference type="PDB" id="4RHB">
    <property type="method" value="X-ray"/>
    <property type="resolution" value="3.35 A"/>
    <property type="chains" value="A/C=203-784"/>
</dbReference>
<dbReference type="PDBsum" id="4RHB"/>
<dbReference type="SMR" id="P31554"/>
<dbReference type="BioGRID" id="4259723">
    <property type="interactions" value="271"/>
</dbReference>
<dbReference type="ComplexPortal" id="CPX-1093">
    <property type="entry name" value="LptDE outer membrane translocon complex"/>
</dbReference>
<dbReference type="DIP" id="DIP-10029N"/>
<dbReference type="FunCoup" id="P31554">
    <property type="interactions" value="196"/>
</dbReference>
<dbReference type="IntAct" id="P31554">
    <property type="interactions" value="8"/>
</dbReference>
<dbReference type="STRING" id="511145.b0054"/>
<dbReference type="TCDB" id="1.B.42.1.2">
    <property type="family name" value="the outer membrane lipopolysaccharide export porin (lps-ep) family"/>
</dbReference>
<dbReference type="CarbonylDB" id="P31554"/>
<dbReference type="jPOST" id="P31554"/>
<dbReference type="PaxDb" id="511145-b0054"/>
<dbReference type="EnsemblBacteria" id="AAC73165">
    <property type="protein sequence ID" value="AAC73165"/>
    <property type="gene ID" value="b0054"/>
</dbReference>
<dbReference type="GeneID" id="945011"/>
<dbReference type="KEGG" id="ecj:JW0053"/>
<dbReference type="KEGG" id="eco:b0054"/>
<dbReference type="KEGG" id="ecoc:C3026_00280"/>
<dbReference type="PATRIC" id="fig|1411691.4.peg.2229"/>
<dbReference type="EchoBASE" id="EB1529"/>
<dbReference type="eggNOG" id="COG1452">
    <property type="taxonomic scope" value="Bacteria"/>
</dbReference>
<dbReference type="HOGENOM" id="CLU_009039_2_0_6"/>
<dbReference type="InParanoid" id="P31554"/>
<dbReference type="OMA" id="DYSHLDW"/>
<dbReference type="OrthoDB" id="9760225at2"/>
<dbReference type="PhylomeDB" id="P31554"/>
<dbReference type="BioCyc" id="EcoCyc:EG11569-MONOMER"/>
<dbReference type="BioCyc" id="MetaCyc:EG11569-MONOMER"/>
<dbReference type="EvolutionaryTrace" id="P31554"/>
<dbReference type="PHI-base" id="PHI:10312"/>
<dbReference type="PRO" id="PR:P31554"/>
<dbReference type="Proteomes" id="UP000000625">
    <property type="component" value="Chromosome"/>
</dbReference>
<dbReference type="GO" id="GO:0009279">
    <property type="term" value="C:cell outer membrane"/>
    <property type="evidence" value="ECO:0000314"/>
    <property type="project" value="EcoCyc"/>
</dbReference>
<dbReference type="GO" id="GO:1990351">
    <property type="term" value="C:transporter complex"/>
    <property type="evidence" value="ECO:0000314"/>
    <property type="project" value="EcoCyc"/>
</dbReference>
<dbReference type="GO" id="GO:0043165">
    <property type="term" value="P:Gram-negative-bacterium-type cell outer membrane assembly"/>
    <property type="evidence" value="ECO:0000315"/>
    <property type="project" value="EcoCyc"/>
</dbReference>
<dbReference type="GO" id="GO:0015920">
    <property type="term" value="P:lipopolysaccharide transport"/>
    <property type="evidence" value="ECO:0000303"/>
    <property type="project" value="ComplexPortal"/>
</dbReference>
<dbReference type="FunFam" id="2.60.450.10:FF:000003">
    <property type="entry name" value="LPS-assembly protein LptD"/>
    <property type="match status" value="1"/>
</dbReference>
<dbReference type="Gene3D" id="2.60.450.10">
    <property type="entry name" value="Lipopolysaccharide (LPS) transport protein A like domain"/>
    <property type="match status" value="1"/>
</dbReference>
<dbReference type="HAMAP" id="MF_01411">
    <property type="entry name" value="LPS_assembly_LptD"/>
    <property type="match status" value="1"/>
</dbReference>
<dbReference type="InterPro" id="IPR020889">
    <property type="entry name" value="LipoPS_assembly_LptD"/>
</dbReference>
<dbReference type="InterPro" id="IPR050218">
    <property type="entry name" value="LptD"/>
</dbReference>
<dbReference type="InterPro" id="IPR007543">
    <property type="entry name" value="LptD_C"/>
</dbReference>
<dbReference type="InterPro" id="IPR005653">
    <property type="entry name" value="OstA-like_N"/>
</dbReference>
<dbReference type="NCBIfam" id="NF002997">
    <property type="entry name" value="PRK03761.1"/>
    <property type="match status" value="1"/>
</dbReference>
<dbReference type="PANTHER" id="PTHR30189">
    <property type="entry name" value="LPS-ASSEMBLY PROTEIN"/>
    <property type="match status" value="1"/>
</dbReference>
<dbReference type="PANTHER" id="PTHR30189:SF1">
    <property type="entry name" value="LPS-ASSEMBLY PROTEIN LPTD"/>
    <property type="match status" value="1"/>
</dbReference>
<dbReference type="Pfam" id="PF04453">
    <property type="entry name" value="LptD"/>
    <property type="match status" value="1"/>
</dbReference>
<dbReference type="Pfam" id="PF03968">
    <property type="entry name" value="LptD_N"/>
    <property type="match status" value="1"/>
</dbReference>
<organism>
    <name type="scientific">Escherichia coli (strain K12)</name>
    <dbReference type="NCBI Taxonomy" id="83333"/>
    <lineage>
        <taxon>Bacteria</taxon>
        <taxon>Pseudomonadati</taxon>
        <taxon>Pseudomonadota</taxon>
        <taxon>Gammaproteobacteria</taxon>
        <taxon>Enterobacterales</taxon>
        <taxon>Enterobacteriaceae</taxon>
        <taxon>Escherichia</taxon>
    </lineage>
</organism>
<name>LPTD_ECOLI</name>
<keyword id="KW-0002">3D-structure</keyword>
<keyword id="KW-0998">Cell outer membrane</keyword>
<keyword id="KW-0903">Direct protein sequencing</keyword>
<keyword id="KW-1015">Disulfide bond</keyword>
<keyword id="KW-0472">Membrane</keyword>
<keyword id="KW-1185">Reference proteome</keyword>
<keyword id="KW-0732">Signal</keyword>
<protein>
    <recommendedName>
        <fullName evidence="1">LPS-assembly protein LptD</fullName>
    </recommendedName>
    <alternativeName>
        <fullName>Organic solvent tolerance protein</fullName>
    </alternativeName>
</protein>